<comment type="function">
    <text evidence="1">This protein binds specifically to 23S rRNA; its binding is stimulated by other ribosomal proteins, e.g. L4, L17, and L20. It is important during the early stages of 50S assembly. It makes multiple contacts with different domains of the 23S rRNA in the assembled 50S subunit and ribosome (By similarity).</text>
</comment>
<comment type="function">
    <text evidence="1">The globular domain of the protein is located near the polypeptide exit tunnel on the outside of the subunit, while an extended beta-hairpin is found that lines the wall of the exit tunnel in the center of the 70S ribosome.</text>
</comment>
<comment type="subunit">
    <text evidence="1">Part of the 50S ribosomal subunit.</text>
</comment>
<comment type="similarity">
    <text evidence="1">Belongs to the universal ribosomal protein uL22 family.</text>
</comment>
<reference key="1">
    <citation type="journal article" date="2007" name="J. Bacteriol.">
        <title>Whole-genome analysis of the methyl tert-butyl ether-degrading beta-proteobacterium Methylibium petroleiphilum PM1.</title>
        <authorList>
            <person name="Kane S.R."/>
            <person name="Chakicherla A.Y."/>
            <person name="Chain P.S.G."/>
            <person name="Schmidt R."/>
            <person name="Shin M.W."/>
            <person name="Legler T.C."/>
            <person name="Scow K.M."/>
            <person name="Larimer F.W."/>
            <person name="Lucas S.M."/>
            <person name="Richardson P.M."/>
            <person name="Hristova K.R."/>
        </authorList>
    </citation>
    <scope>NUCLEOTIDE SEQUENCE [LARGE SCALE GENOMIC DNA]</scope>
    <source>
        <strain>ATCC BAA-1232 / LMG 22953 / PM1</strain>
    </source>
</reference>
<proteinExistence type="inferred from homology"/>
<keyword id="KW-1185">Reference proteome</keyword>
<keyword id="KW-0687">Ribonucleoprotein</keyword>
<keyword id="KW-0689">Ribosomal protein</keyword>
<keyword id="KW-0694">RNA-binding</keyword>
<keyword id="KW-0699">rRNA-binding</keyword>
<name>RL22_METPP</name>
<organism>
    <name type="scientific">Methylibium petroleiphilum (strain ATCC BAA-1232 / LMG 22953 / PM1)</name>
    <dbReference type="NCBI Taxonomy" id="420662"/>
    <lineage>
        <taxon>Bacteria</taxon>
        <taxon>Pseudomonadati</taxon>
        <taxon>Pseudomonadota</taxon>
        <taxon>Betaproteobacteria</taxon>
        <taxon>Burkholderiales</taxon>
        <taxon>Sphaerotilaceae</taxon>
        <taxon>Methylibium</taxon>
    </lineage>
</organism>
<dbReference type="EMBL" id="CP000555">
    <property type="protein sequence ID" value="ABM96391.1"/>
    <property type="molecule type" value="Genomic_DNA"/>
</dbReference>
<dbReference type="SMR" id="A2SLF2"/>
<dbReference type="STRING" id="420662.Mpe_A3438"/>
<dbReference type="KEGG" id="mpt:Mpe_A3438"/>
<dbReference type="eggNOG" id="COG0091">
    <property type="taxonomic scope" value="Bacteria"/>
</dbReference>
<dbReference type="HOGENOM" id="CLU_083987_3_3_4"/>
<dbReference type="Proteomes" id="UP000000366">
    <property type="component" value="Chromosome"/>
</dbReference>
<dbReference type="GO" id="GO:0022625">
    <property type="term" value="C:cytosolic large ribosomal subunit"/>
    <property type="evidence" value="ECO:0007669"/>
    <property type="project" value="TreeGrafter"/>
</dbReference>
<dbReference type="GO" id="GO:0019843">
    <property type="term" value="F:rRNA binding"/>
    <property type="evidence" value="ECO:0007669"/>
    <property type="project" value="UniProtKB-UniRule"/>
</dbReference>
<dbReference type="GO" id="GO:0003735">
    <property type="term" value="F:structural constituent of ribosome"/>
    <property type="evidence" value="ECO:0007669"/>
    <property type="project" value="InterPro"/>
</dbReference>
<dbReference type="GO" id="GO:0006412">
    <property type="term" value="P:translation"/>
    <property type="evidence" value="ECO:0007669"/>
    <property type="project" value="UniProtKB-UniRule"/>
</dbReference>
<dbReference type="CDD" id="cd00336">
    <property type="entry name" value="Ribosomal_L22"/>
    <property type="match status" value="1"/>
</dbReference>
<dbReference type="Gene3D" id="3.90.470.10">
    <property type="entry name" value="Ribosomal protein L22/L17"/>
    <property type="match status" value="1"/>
</dbReference>
<dbReference type="HAMAP" id="MF_01331_B">
    <property type="entry name" value="Ribosomal_uL22_B"/>
    <property type="match status" value="1"/>
</dbReference>
<dbReference type="InterPro" id="IPR001063">
    <property type="entry name" value="Ribosomal_uL22"/>
</dbReference>
<dbReference type="InterPro" id="IPR005727">
    <property type="entry name" value="Ribosomal_uL22_bac/chlpt-type"/>
</dbReference>
<dbReference type="InterPro" id="IPR047867">
    <property type="entry name" value="Ribosomal_uL22_bac/org-type"/>
</dbReference>
<dbReference type="InterPro" id="IPR018260">
    <property type="entry name" value="Ribosomal_uL22_CS"/>
</dbReference>
<dbReference type="InterPro" id="IPR036394">
    <property type="entry name" value="Ribosomal_uL22_sf"/>
</dbReference>
<dbReference type="NCBIfam" id="TIGR01044">
    <property type="entry name" value="rplV_bact"/>
    <property type="match status" value="1"/>
</dbReference>
<dbReference type="PANTHER" id="PTHR13501">
    <property type="entry name" value="CHLOROPLAST 50S RIBOSOMAL PROTEIN L22-RELATED"/>
    <property type="match status" value="1"/>
</dbReference>
<dbReference type="PANTHER" id="PTHR13501:SF8">
    <property type="entry name" value="LARGE RIBOSOMAL SUBUNIT PROTEIN UL22M"/>
    <property type="match status" value="1"/>
</dbReference>
<dbReference type="Pfam" id="PF00237">
    <property type="entry name" value="Ribosomal_L22"/>
    <property type="match status" value="1"/>
</dbReference>
<dbReference type="SUPFAM" id="SSF54843">
    <property type="entry name" value="Ribosomal protein L22"/>
    <property type="match status" value="1"/>
</dbReference>
<dbReference type="PROSITE" id="PS00464">
    <property type="entry name" value="RIBOSOMAL_L22"/>
    <property type="match status" value="1"/>
</dbReference>
<feature type="chain" id="PRO_1000052608" description="Large ribosomal subunit protein uL22">
    <location>
        <begin position="1"/>
        <end position="109"/>
    </location>
</feature>
<evidence type="ECO:0000255" key="1">
    <source>
        <dbReference type="HAMAP-Rule" id="MF_01331"/>
    </source>
</evidence>
<evidence type="ECO:0000305" key="2"/>
<gene>
    <name evidence="1" type="primary">rplV</name>
    <name type="ordered locus">Mpe_A3438</name>
</gene>
<accession>A2SLF2</accession>
<protein>
    <recommendedName>
        <fullName evidence="1">Large ribosomal subunit protein uL22</fullName>
    </recommendedName>
    <alternativeName>
        <fullName evidence="2">50S ribosomal protein L22</fullName>
    </alternativeName>
</protein>
<sequence length="109" mass="11900">METRAIVRGVRLSVDKGRPVADLVRGKKVDQALNILEFTQKKAAVIIKKALESAIANAEHNDGADIDELKVKTIHVEQGATLKRFSARAKGRGNRISKPTCHIFVTVGN</sequence>